<comment type="function">
    <text evidence="1">Single strand-specific metallo-endoribonuclease involved in late-stage 70S ribosome quality control and in maturation of the 3' terminus of the 16S rRNA.</text>
</comment>
<comment type="cofactor">
    <cofactor evidence="1">
        <name>Zn(2+)</name>
        <dbReference type="ChEBI" id="CHEBI:29105"/>
    </cofactor>
    <text evidence="1">Binds 1 zinc ion.</text>
</comment>
<comment type="subcellular location">
    <subcellularLocation>
        <location evidence="1">Cytoplasm</location>
    </subcellularLocation>
</comment>
<comment type="similarity">
    <text evidence="1">Belongs to the endoribonuclease YbeY family.</text>
</comment>
<keyword id="KW-0963">Cytoplasm</keyword>
<keyword id="KW-0255">Endonuclease</keyword>
<keyword id="KW-0378">Hydrolase</keyword>
<keyword id="KW-0479">Metal-binding</keyword>
<keyword id="KW-0540">Nuclease</keyword>
<keyword id="KW-1185">Reference proteome</keyword>
<keyword id="KW-0690">Ribosome biogenesis</keyword>
<keyword id="KW-0698">rRNA processing</keyword>
<keyword id="KW-0862">Zinc</keyword>
<proteinExistence type="inferred from homology"/>
<reference key="1">
    <citation type="journal article" date="1997" name="Nature">
        <title>Genomic sequence of a Lyme disease spirochaete, Borrelia burgdorferi.</title>
        <authorList>
            <person name="Fraser C.M."/>
            <person name="Casjens S."/>
            <person name="Huang W.M."/>
            <person name="Sutton G.G."/>
            <person name="Clayton R.A."/>
            <person name="Lathigra R."/>
            <person name="White O."/>
            <person name="Ketchum K.A."/>
            <person name="Dodson R.J."/>
            <person name="Hickey E.K."/>
            <person name="Gwinn M.L."/>
            <person name="Dougherty B.A."/>
            <person name="Tomb J.-F."/>
            <person name="Fleischmann R.D."/>
            <person name="Richardson D.L."/>
            <person name="Peterson J.D."/>
            <person name="Kerlavage A.R."/>
            <person name="Quackenbush J."/>
            <person name="Salzberg S.L."/>
            <person name="Hanson M."/>
            <person name="van Vugt R."/>
            <person name="Palmer N."/>
            <person name="Adams M.D."/>
            <person name="Gocayne J.D."/>
            <person name="Weidman J.F."/>
            <person name="Utterback T.R."/>
            <person name="Watthey L."/>
            <person name="McDonald L.A."/>
            <person name="Artiach P."/>
            <person name="Bowman C."/>
            <person name="Garland S.A."/>
            <person name="Fujii C."/>
            <person name="Cotton M.D."/>
            <person name="Horst K."/>
            <person name="Roberts K.M."/>
            <person name="Hatch B."/>
            <person name="Smith H.O."/>
            <person name="Venter J.C."/>
        </authorList>
    </citation>
    <scope>NUCLEOTIDE SEQUENCE [LARGE SCALE GENOMIC DNA]</scope>
    <source>
        <strain>ATCC 35210 / DSM 4680 / CIP 102532 / B31</strain>
    </source>
</reference>
<evidence type="ECO:0000255" key="1">
    <source>
        <dbReference type="HAMAP-Rule" id="MF_00009"/>
    </source>
</evidence>
<accession>O51087</accession>
<dbReference type="EC" id="3.1.-.-" evidence="1"/>
<dbReference type="EMBL" id="AE000783">
    <property type="protein sequence ID" value="AAC66448.1"/>
    <property type="molecule type" value="Genomic_DNA"/>
</dbReference>
<dbReference type="PIR" id="D70107">
    <property type="entry name" value="D70107"/>
</dbReference>
<dbReference type="RefSeq" id="NP_212194.1">
    <property type="nucleotide sequence ID" value="NC_001318.1"/>
</dbReference>
<dbReference type="RefSeq" id="WP_002658307.1">
    <property type="nucleotide sequence ID" value="NC_001318.1"/>
</dbReference>
<dbReference type="SMR" id="O51087"/>
<dbReference type="STRING" id="224326.BB_0060"/>
<dbReference type="PaxDb" id="224326-BB_0060"/>
<dbReference type="EnsemblBacteria" id="AAC66448">
    <property type="protein sequence ID" value="AAC66448"/>
    <property type="gene ID" value="BB_0060"/>
</dbReference>
<dbReference type="GeneID" id="56568157"/>
<dbReference type="KEGG" id="bbu:BB_0060"/>
<dbReference type="PATRIC" id="fig|224326.49.peg.458"/>
<dbReference type="HOGENOM" id="CLU_106710_3_3_12"/>
<dbReference type="OrthoDB" id="9807740at2"/>
<dbReference type="Proteomes" id="UP000001807">
    <property type="component" value="Chromosome"/>
</dbReference>
<dbReference type="GO" id="GO:0005737">
    <property type="term" value="C:cytoplasm"/>
    <property type="evidence" value="ECO:0007669"/>
    <property type="project" value="UniProtKB-SubCell"/>
</dbReference>
<dbReference type="GO" id="GO:0004222">
    <property type="term" value="F:metalloendopeptidase activity"/>
    <property type="evidence" value="ECO:0007669"/>
    <property type="project" value="InterPro"/>
</dbReference>
<dbReference type="GO" id="GO:0004521">
    <property type="term" value="F:RNA endonuclease activity"/>
    <property type="evidence" value="ECO:0007669"/>
    <property type="project" value="UniProtKB-UniRule"/>
</dbReference>
<dbReference type="GO" id="GO:0008270">
    <property type="term" value="F:zinc ion binding"/>
    <property type="evidence" value="ECO:0007669"/>
    <property type="project" value="UniProtKB-UniRule"/>
</dbReference>
<dbReference type="GO" id="GO:0006364">
    <property type="term" value="P:rRNA processing"/>
    <property type="evidence" value="ECO:0007669"/>
    <property type="project" value="UniProtKB-UniRule"/>
</dbReference>
<dbReference type="Gene3D" id="3.40.390.30">
    <property type="entry name" value="Metalloproteases ('zincins'), catalytic domain"/>
    <property type="match status" value="1"/>
</dbReference>
<dbReference type="HAMAP" id="MF_00009">
    <property type="entry name" value="Endoribonucl_YbeY"/>
    <property type="match status" value="1"/>
</dbReference>
<dbReference type="InterPro" id="IPR023091">
    <property type="entry name" value="MetalPrtase_cat_dom_sf_prd"/>
</dbReference>
<dbReference type="InterPro" id="IPR002036">
    <property type="entry name" value="YbeY"/>
</dbReference>
<dbReference type="InterPro" id="IPR020549">
    <property type="entry name" value="YbeY_CS"/>
</dbReference>
<dbReference type="NCBIfam" id="TIGR00043">
    <property type="entry name" value="rRNA maturation RNase YbeY"/>
    <property type="match status" value="1"/>
</dbReference>
<dbReference type="PANTHER" id="PTHR46986">
    <property type="entry name" value="ENDORIBONUCLEASE YBEY, CHLOROPLASTIC"/>
    <property type="match status" value="1"/>
</dbReference>
<dbReference type="PANTHER" id="PTHR46986:SF1">
    <property type="entry name" value="ENDORIBONUCLEASE YBEY, CHLOROPLASTIC"/>
    <property type="match status" value="1"/>
</dbReference>
<dbReference type="Pfam" id="PF02130">
    <property type="entry name" value="YbeY"/>
    <property type="match status" value="1"/>
</dbReference>
<dbReference type="SUPFAM" id="SSF55486">
    <property type="entry name" value="Metalloproteases ('zincins'), catalytic domain"/>
    <property type="match status" value="1"/>
</dbReference>
<dbReference type="PROSITE" id="PS01306">
    <property type="entry name" value="UPF0054"/>
    <property type="match status" value="1"/>
</dbReference>
<sequence length="155" mass="18259">MSKSDLNLLVENIKFEHLNVFYDFVVSVLNALSISDFELSVILCDNAYIQELNNKFRNKNEPTDVLSFNYNEHNELNEDLVDGINYKIQGDLVISFEYLKFSAQEFNVEIYEELQRVTIHGILHLMGYKHETNDFQKEGMLILQENILKENKRVF</sequence>
<gene>
    <name evidence="1" type="primary">ybeY</name>
    <name type="ordered locus">BB_0060</name>
</gene>
<organism>
    <name type="scientific">Borreliella burgdorferi (strain ATCC 35210 / DSM 4680 / CIP 102532 / B31)</name>
    <name type="common">Borrelia burgdorferi</name>
    <dbReference type="NCBI Taxonomy" id="224326"/>
    <lineage>
        <taxon>Bacteria</taxon>
        <taxon>Pseudomonadati</taxon>
        <taxon>Spirochaetota</taxon>
        <taxon>Spirochaetia</taxon>
        <taxon>Spirochaetales</taxon>
        <taxon>Borreliaceae</taxon>
        <taxon>Borreliella</taxon>
    </lineage>
</organism>
<protein>
    <recommendedName>
        <fullName evidence="1">Endoribonuclease YbeY</fullName>
        <ecNumber evidence="1">3.1.-.-</ecNumber>
    </recommendedName>
</protein>
<name>YBEY_BORBU</name>
<feature type="chain" id="PRO_0000102418" description="Endoribonuclease YbeY">
    <location>
        <begin position="1"/>
        <end position="155"/>
    </location>
</feature>
<feature type="binding site" evidence="1">
    <location>
        <position position="120"/>
    </location>
    <ligand>
        <name>Zn(2+)</name>
        <dbReference type="ChEBI" id="CHEBI:29105"/>
        <note>catalytic</note>
    </ligand>
</feature>
<feature type="binding site" evidence="1">
    <location>
        <position position="124"/>
    </location>
    <ligand>
        <name>Zn(2+)</name>
        <dbReference type="ChEBI" id="CHEBI:29105"/>
        <note>catalytic</note>
    </ligand>
</feature>
<feature type="binding site" evidence="1">
    <location>
        <position position="130"/>
    </location>
    <ligand>
        <name>Zn(2+)</name>
        <dbReference type="ChEBI" id="CHEBI:29105"/>
        <note>catalytic</note>
    </ligand>
</feature>